<proteinExistence type="inferred from homology"/>
<dbReference type="EMBL" id="AL591688">
    <property type="protein sequence ID" value="CAC45188.1"/>
    <property type="molecule type" value="Genomic_DNA"/>
</dbReference>
<dbReference type="RefSeq" id="NP_384722.1">
    <property type="nucleotide sequence ID" value="NC_003047.1"/>
</dbReference>
<dbReference type="RefSeq" id="WP_010968706.1">
    <property type="nucleotide sequence ID" value="NC_003047.1"/>
</dbReference>
<dbReference type="SMR" id="Q92S21"/>
<dbReference type="EnsemblBacteria" id="CAC45188">
    <property type="protein sequence ID" value="CAC45188"/>
    <property type="gene ID" value="SMc02312"/>
</dbReference>
<dbReference type="KEGG" id="sme:SMc02312"/>
<dbReference type="PATRIC" id="fig|266834.11.peg.1989"/>
<dbReference type="eggNOG" id="COG3024">
    <property type="taxonomic scope" value="Bacteria"/>
</dbReference>
<dbReference type="HOGENOM" id="CLU_178280_2_2_5"/>
<dbReference type="OrthoDB" id="9809663at2"/>
<dbReference type="Proteomes" id="UP000001976">
    <property type="component" value="Chromosome"/>
</dbReference>
<dbReference type="GO" id="GO:0008657">
    <property type="term" value="F:DNA topoisomerase type II (double strand cut, ATP-hydrolyzing) inhibitor activity"/>
    <property type="evidence" value="ECO:0007669"/>
    <property type="project" value="UniProtKB-UniRule"/>
</dbReference>
<dbReference type="GO" id="GO:0008270">
    <property type="term" value="F:zinc ion binding"/>
    <property type="evidence" value="ECO:0007669"/>
    <property type="project" value="UniProtKB-UniRule"/>
</dbReference>
<dbReference type="GO" id="GO:0006355">
    <property type="term" value="P:regulation of DNA-templated transcription"/>
    <property type="evidence" value="ECO:0007669"/>
    <property type="project" value="InterPro"/>
</dbReference>
<dbReference type="Gene3D" id="3.30.50.10">
    <property type="entry name" value="Erythroid Transcription Factor GATA-1, subunit A"/>
    <property type="match status" value="1"/>
</dbReference>
<dbReference type="HAMAP" id="MF_00649">
    <property type="entry name" value="DNA_gyrase_inhibitor_YacG"/>
    <property type="match status" value="1"/>
</dbReference>
<dbReference type="InterPro" id="IPR005584">
    <property type="entry name" value="DNA_gyrase_inhibitor_YacG"/>
</dbReference>
<dbReference type="InterPro" id="IPR013088">
    <property type="entry name" value="Znf_NHR/GATA"/>
</dbReference>
<dbReference type="NCBIfam" id="NF002362">
    <property type="entry name" value="PRK01343.1"/>
    <property type="match status" value="1"/>
</dbReference>
<dbReference type="PANTHER" id="PTHR36150">
    <property type="entry name" value="DNA GYRASE INHIBITOR YACG"/>
    <property type="match status" value="1"/>
</dbReference>
<dbReference type="PANTHER" id="PTHR36150:SF1">
    <property type="entry name" value="DNA GYRASE INHIBITOR YACG"/>
    <property type="match status" value="1"/>
</dbReference>
<dbReference type="Pfam" id="PF03884">
    <property type="entry name" value="YacG"/>
    <property type="match status" value="1"/>
</dbReference>
<dbReference type="SUPFAM" id="SSF57716">
    <property type="entry name" value="Glucocorticoid receptor-like (DNA-binding domain)"/>
    <property type="match status" value="1"/>
</dbReference>
<keyword id="KW-0479">Metal-binding</keyword>
<keyword id="KW-1185">Reference proteome</keyword>
<keyword id="KW-0862">Zinc</keyword>
<evidence type="ECO:0000255" key="1">
    <source>
        <dbReference type="HAMAP-Rule" id="MF_00649"/>
    </source>
</evidence>
<protein>
    <recommendedName>
        <fullName evidence="1">DNA gyrase inhibitor YacG</fullName>
    </recommendedName>
</protein>
<feature type="chain" id="PRO_0000211720" description="DNA gyrase inhibitor YacG">
    <location>
        <begin position="1"/>
        <end position="70"/>
    </location>
</feature>
<feature type="binding site" evidence="1">
    <location>
        <position position="21"/>
    </location>
    <ligand>
        <name>Zn(2+)</name>
        <dbReference type="ChEBI" id="CHEBI:29105"/>
    </ligand>
</feature>
<feature type="binding site" evidence="1">
    <location>
        <position position="24"/>
    </location>
    <ligand>
        <name>Zn(2+)</name>
        <dbReference type="ChEBI" id="CHEBI:29105"/>
    </ligand>
</feature>
<feature type="binding site" evidence="1">
    <location>
        <position position="36"/>
    </location>
    <ligand>
        <name>Zn(2+)</name>
        <dbReference type="ChEBI" id="CHEBI:29105"/>
    </ligand>
</feature>
<feature type="binding site" evidence="1">
    <location>
        <position position="40"/>
    </location>
    <ligand>
        <name>Zn(2+)</name>
        <dbReference type="ChEBI" id="CHEBI:29105"/>
    </ligand>
</feature>
<gene>
    <name evidence="1" type="primary">yacG</name>
    <name type="ordered locus">R00616</name>
    <name type="ORF">SMc02312</name>
</gene>
<comment type="function">
    <text evidence="1">Inhibits all the catalytic activities of DNA gyrase by preventing its interaction with DNA. Acts by binding directly to the C-terminal domain of GyrB, which probably disrupts DNA binding by the gyrase.</text>
</comment>
<comment type="cofactor">
    <cofactor evidence="1">
        <name>Zn(2+)</name>
        <dbReference type="ChEBI" id="CHEBI:29105"/>
    </cofactor>
    <text evidence="1">Binds 1 zinc ion.</text>
</comment>
<comment type="subunit">
    <text evidence="1">Interacts with GyrB.</text>
</comment>
<comment type="similarity">
    <text evidence="1">Belongs to the DNA gyrase inhibitor YacG family.</text>
</comment>
<organism>
    <name type="scientific">Rhizobium meliloti (strain 1021)</name>
    <name type="common">Ensifer meliloti</name>
    <name type="synonym">Sinorhizobium meliloti</name>
    <dbReference type="NCBI Taxonomy" id="266834"/>
    <lineage>
        <taxon>Bacteria</taxon>
        <taxon>Pseudomonadati</taxon>
        <taxon>Pseudomonadota</taxon>
        <taxon>Alphaproteobacteria</taxon>
        <taxon>Hyphomicrobiales</taxon>
        <taxon>Rhizobiaceae</taxon>
        <taxon>Sinorhizobium/Ensifer group</taxon>
        <taxon>Sinorhizobium</taxon>
    </lineage>
</organism>
<sequence length="70" mass="7784">MRGGGKKNGSNVEPLRATRPCAECGRPSVREHYPFCSERCRNVDLNRWLSGSYAIPVADDESKADDGDER</sequence>
<accession>Q92S21</accession>
<reference key="1">
    <citation type="journal article" date="2001" name="Proc. Natl. Acad. Sci. U.S.A.">
        <title>Analysis of the chromosome sequence of the legume symbiont Sinorhizobium meliloti strain 1021.</title>
        <authorList>
            <person name="Capela D."/>
            <person name="Barloy-Hubler F."/>
            <person name="Gouzy J."/>
            <person name="Bothe G."/>
            <person name="Ampe F."/>
            <person name="Batut J."/>
            <person name="Boistard P."/>
            <person name="Becker A."/>
            <person name="Boutry M."/>
            <person name="Cadieu E."/>
            <person name="Dreano S."/>
            <person name="Gloux S."/>
            <person name="Godrie T."/>
            <person name="Goffeau A."/>
            <person name="Kahn D."/>
            <person name="Kiss E."/>
            <person name="Lelaure V."/>
            <person name="Masuy D."/>
            <person name="Pohl T."/>
            <person name="Portetelle D."/>
            <person name="Puehler A."/>
            <person name="Purnelle B."/>
            <person name="Ramsperger U."/>
            <person name="Renard C."/>
            <person name="Thebault P."/>
            <person name="Vandenbol M."/>
            <person name="Weidner S."/>
            <person name="Galibert F."/>
        </authorList>
    </citation>
    <scope>NUCLEOTIDE SEQUENCE [LARGE SCALE GENOMIC DNA]</scope>
    <source>
        <strain>1021</strain>
    </source>
</reference>
<reference key="2">
    <citation type="journal article" date="2001" name="Science">
        <title>The composite genome of the legume symbiont Sinorhizobium meliloti.</title>
        <authorList>
            <person name="Galibert F."/>
            <person name="Finan T.M."/>
            <person name="Long S.R."/>
            <person name="Puehler A."/>
            <person name="Abola P."/>
            <person name="Ampe F."/>
            <person name="Barloy-Hubler F."/>
            <person name="Barnett M.J."/>
            <person name="Becker A."/>
            <person name="Boistard P."/>
            <person name="Bothe G."/>
            <person name="Boutry M."/>
            <person name="Bowser L."/>
            <person name="Buhrmester J."/>
            <person name="Cadieu E."/>
            <person name="Capela D."/>
            <person name="Chain P."/>
            <person name="Cowie A."/>
            <person name="Davis R.W."/>
            <person name="Dreano S."/>
            <person name="Federspiel N.A."/>
            <person name="Fisher R.F."/>
            <person name="Gloux S."/>
            <person name="Godrie T."/>
            <person name="Goffeau A."/>
            <person name="Golding B."/>
            <person name="Gouzy J."/>
            <person name="Gurjal M."/>
            <person name="Hernandez-Lucas I."/>
            <person name="Hong A."/>
            <person name="Huizar L."/>
            <person name="Hyman R.W."/>
            <person name="Jones T."/>
            <person name="Kahn D."/>
            <person name="Kahn M.L."/>
            <person name="Kalman S."/>
            <person name="Keating D.H."/>
            <person name="Kiss E."/>
            <person name="Komp C."/>
            <person name="Lelaure V."/>
            <person name="Masuy D."/>
            <person name="Palm C."/>
            <person name="Peck M.C."/>
            <person name="Pohl T.M."/>
            <person name="Portetelle D."/>
            <person name="Purnelle B."/>
            <person name="Ramsperger U."/>
            <person name="Surzycki R."/>
            <person name="Thebault P."/>
            <person name="Vandenbol M."/>
            <person name="Vorhoelter F.J."/>
            <person name="Weidner S."/>
            <person name="Wells D.H."/>
            <person name="Wong K."/>
            <person name="Yeh K.-C."/>
            <person name="Batut J."/>
        </authorList>
    </citation>
    <scope>NUCLEOTIDE SEQUENCE [LARGE SCALE GENOMIC DNA]</scope>
    <source>
        <strain>1021</strain>
    </source>
</reference>
<name>YACG_RHIME</name>